<organism>
    <name type="scientific">Proteus mirabilis (strain HI4320)</name>
    <dbReference type="NCBI Taxonomy" id="529507"/>
    <lineage>
        <taxon>Bacteria</taxon>
        <taxon>Pseudomonadati</taxon>
        <taxon>Pseudomonadota</taxon>
        <taxon>Gammaproteobacteria</taxon>
        <taxon>Enterobacterales</taxon>
        <taxon>Morganellaceae</taxon>
        <taxon>Proteus</taxon>
    </lineage>
</organism>
<reference key="1">
    <citation type="journal article" date="2008" name="J. Bacteriol.">
        <title>Complete genome sequence of uropathogenic Proteus mirabilis, a master of both adherence and motility.</title>
        <authorList>
            <person name="Pearson M.M."/>
            <person name="Sebaihia M."/>
            <person name="Churcher C."/>
            <person name="Quail M.A."/>
            <person name="Seshasayee A.S."/>
            <person name="Luscombe N.M."/>
            <person name="Abdellah Z."/>
            <person name="Arrosmith C."/>
            <person name="Atkin B."/>
            <person name="Chillingworth T."/>
            <person name="Hauser H."/>
            <person name="Jagels K."/>
            <person name="Moule S."/>
            <person name="Mungall K."/>
            <person name="Norbertczak H."/>
            <person name="Rabbinowitsch E."/>
            <person name="Walker D."/>
            <person name="Whithead S."/>
            <person name="Thomson N.R."/>
            <person name="Rather P.N."/>
            <person name="Parkhill J."/>
            <person name="Mobley H.L.T."/>
        </authorList>
    </citation>
    <scope>NUCLEOTIDE SEQUENCE [LARGE SCALE GENOMIC DNA]</scope>
    <source>
        <strain>HI4320</strain>
    </source>
</reference>
<dbReference type="EMBL" id="AM942759">
    <property type="protein sequence ID" value="CAR47213.1"/>
    <property type="molecule type" value="Genomic_DNA"/>
</dbReference>
<dbReference type="RefSeq" id="WP_012368852.1">
    <property type="nucleotide sequence ID" value="NC_010554.1"/>
</dbReference>
<dbReference type="SMR" id="B4EXQ1"/>
<dbReference type="EnsemblBacteria" id="CAR47213">
    <property type="protein sequence ID" value="CAR47213"/>
    <property type="gene ID" value="PMI3701"/>
</dbReference>
<dbReference type="GeneID" id="6801223"/>
<dbReference type="KEGG" id="pmr:PMI3701"/>
<dbReference type="PATRIC" id="fig|529507.6.peg.3622"/>
<dbReference type="eggNOG" id="COG3633">
    <property type="taxonomic scope" value="Bacteria"/>
</dbReference>
<dbReference type="HOGENOM" id="CLU_044581_0_0_6"/>
<dbReference type="Proteomes" id="UP000008319">
    <property type="component" value="Chromosome"/>
</dbReference>
<dbReference type="GO" id="GO:0005886">
    <property type="term" value="C:plasma membrane"/>
    <property type="evidence" value="ECO:0007669"/>
    <property type="project" value="UniProtKB-SubCell"/>
</dbReference>
<dbReference type="GO" id="GO:0005295">
    <property type="term" value="F:neutral L-amino acid:sodium symporter activity"/>
    <property type="evidence" value="ECO:0007669"/>
    <property type="project" value="TreeGrafter"/>
</dbReference>
<dbReference type="GO" id="GO:0032329">
    <property type="term" value="P:serine transport"/>
    <property type="evidence" value="ECO:0007669"/>
    <property type="project" value="InterPro"/>
</dbReference>
<dbReference type="GO" id="GO:0015826">
    <property type="term" value="P:threonine transport"/>
    <property type="evidence" value="ECO:0007669"/>
    <property type="project" value="InterPro"/>
</dbReference>
<dbReference type="FunFam" id="1.10.3860.10:FF:000003">
    <property type="entry name" value="Serine/threonine transporter sstT"/>
    <property type="match status" value="1"/>
</dbReference>
<dbReference type="Gene3D" id="1.10.3860.10">
    <property type="entry name" value="Sodium:dicarboxylate symporter"/>
    <property type="match status" value="1"/>
</dbReference>
<dbReference type="HAMAP" id="MF_01582">
    <property type="entry name" value="Ser_Thr_transp_SstT"/>
    <property type="match status" value="1"/>
</dbReference>
<dbReference type="InterPro" id="IPR001991">
    <property type="entry name" value="Na-dicarboxylate_symporter"/>
</dbReference>
<dbReference type="InterPro" id="IPR036458">
    <property type="entry name" value="Na:dicarbo_symporter_sf"/>
</dbReference>
<dbReference type="InterPro" id="IPR023025">
    <property type="entry name" value="Ser_Thr_transp_SstT"/>
</dbReference>
<dbReference type="NCBIfam" id="NF010151">
    <property type="entry name" value="PRK13628.1"/>
    <property type="match status" value="1"/>
</dbReference>
<dbReference type="PANTHER" id="PTHR42865">
    <property type="entry name" value="PROTON/GLUTAMATE-ASPARTATE SYMPORTER"/>
    <property type="match status" value="1"/>
</dbReference>
<dbReference type="PANTHER" id="PTHR42865:SF8">
    <property type="entry name" value="SERINE_THREONINE TRANSPORTER SSTT"/>
    <property type="match status" value="1"/>
</dbReference>
<dbReference type="Pfam" id="PF00375">
    <property type="entry name" value="SDF"/>
    <property type="match status" value="1"/>
</dbReference>
<dbReference type="PRINTS" id="PR00173">
    <property type="entry name" value="EDTRNSPORT"/>
</dbReference>
<dbReference type="SUPFAM" id="SSF118215">
    <property type="entry name" value="Proton glutamate symport protein"/>
    <property type="match status" value="1"/>
</dbReference>
<comment type="function">
    <text evidence="1">Involved in the import of serine and threonine into the cell, with the concomitant import of sodium (symport system).</text>
</comment>
<comment type="catalytic activity">
    <reaction evidence="1">
        <text>L-serine(in) + Na(+)(in) = L-serine(out) + Na(+)(out)</text>
        <dbReference type="Rhea" id="RHEA:29575"/>
        <dbReference type="ChEBI" id="CHEBI:29101"/>
        <dbReference type="ChEBI" id="CHEBI:33384"/>
    </reaction>
    <physiologicalReaction direction="right-to-left" evidence="1">
        <dbReference type="Rhea" id="RHEA:29577"/>
    </physiologicalReaction>
</comment>
<comment type="catalytic activity">
    <reaction evidence="1">
        <text>L-threonine(in) + Na(+)(in) = L-threonine(out) + Na(+)(out)</text>
        <dbReference type="Rhea" id="RHEA:69999"/>
        <dbReference type="ChEBI" id="CHEBI:29101"/>
        <dbReference type="ChEBI" id="CHEBI:57926"/>
    </reaction>
    <physiologicalReaction direction="right-to-left" evidence="1">
        <dbReference type="Rhea" id="RHEA:70001"/>
    </physiologicalReaction>
</comment>
<comment type="subcellular location">
    <subcellularLocation>
        <location evidence="1">Cell inner membrane</location>
        <topology evidence="1">Multi-pass membrane protein</topology>
    </subcellularLocation>
</comment>
<comment type="similarity">
    <text evidence="1">Belongs to the dicarboxylate/amino acid:cation symporter (DAACS) (TC 2.A.23) family.</text>
</comment>
<proteinExistence type="inferred from homology"/>
<protein>
    <recommendedName>
        <fullName evidence="1">Serine/threonine transporter SstT</fullName>
    </recommendedName>
    <alternativeName>
        <fullName evidence="1">Na(+)/serine-threonine symporter</fullName>
    </alternativeName>
</protein>
<keyword id="KW-0029">Amino-acid transport</keyword>
<keyword id="KW-0997">Cell inner membrane</keyword>
<keyword id="KW-1003">Cell membrane</keyword>
<keyword id="KW-0472">Membrane</keyword>
<keyword id="KW-1185">Reference proteome</keyword>
<keyword id="KW-0769">Symport</keyword>
<keyword id="KW-0812">Transmembrane</keyword>
<keyword id="KW-1133">Transmembrane helix</keyword>
<keyword id="KW-0813">Transport</keyword>
<evidence type="ECO:0000255" key="1">
    <source>
        <dbReference type="HAMAP-Rule" id="MF_01582"/>
    </source>
</evidence>
<sequence length="417" mass="43878">MDKQQSRVLNLLFQGSLVKQILAGLIAGILLAWLAPEVAKMMSLLGNLFISALKAVAPVLVWVLVMASIANHRQGQKTSIRPILVLYLLATFFAALTAVVASFVFPSVLTLVVNDSQLSPPENIAEVLKGVLINVVANPVDALINGNYMGILAWAIGLGLALRHASDTTKALTQDFADAVTNLVRVVIRLAPIGIFGLVSSTIATTGFKALAGYLHVLLVLIGCMLFVALVVNPLIVFWKIRRNPYPLVWACLRESGVTAFFTRSSAANIPVNMAMCRRMNLNEDTYSVSIPLGATINMGGAAITITILTLAAVNTLGMPVDIPTALLLSLVAAICACGASGVAGGSLLLIPLACSMFGISNDLAMQVVAVGVMIGVLQDSAETALNSSTDVLFTATVCIAEDERLVANPLTEKNNG</sequence>
<name>SSTT_PROMH</name>
<feature type="chain" id="PRO_1000197555" description="Serine/threonine transporter SstT">
    <location>
        <begin position="1"/>
        <end position="417"/>
    </location>
</feature>
<feature type="transmembrane region" description="Helical" evidence="1">
    <location>
        <begin position="21"/>
        <end position="41"/>
    </location>
</feature>
<feature type="transmembrane region" description="Helical" evidence="1">
    <location>
        <begin position="49"/>
        <end position="69"/>
    </location>
</feature>
<feature type="transmembrane region" description="Helical" evidence="1">
    <location>
        <begin position="83"/>
        <end position="103"/>
    </location>
</feature>
<feature type="transmembrane region" description="Helical" evidence="1">
    <location>
        <begin position="142"/>
        <end position="162"/>
    </location>
</feature>
<feature type="transmembrane region" description="Helical" evidence="1">
    <location>
        <begin position="193"/>
        <end position="213"/>
    </location>
</feature>
<feature type="transmembrane region" description="Helical" evidence="1">
    <location>
        <begin position="218"/>
        <end position="238"/>
    </location>
</feature>
<feature type="transmembrane region" description="Helical" evidence="1">
    <location>
        <begin position="291"/>
        <end position="311"/>
    </location>
</feature>
<feature type="transmembrane region" description="Helical" evidence="1">
    <location>
        <begin position="331"/>
        <end position="351"/>
    </location>
</feature>
<gene>
    <name evidence="1" type="primary">sstT</name>
    <name type="ordered locus">PMI3701</name>
</gene>
<accession>B4EXQ1</accession>